<organism>
    <name type="scientific">Caenorhabditis elegans</name>
    <dbReference type="NCBI Taxonomy" id="6239"/>
    <lineage>
        <taxon>Eukaryota</taxon>
        <taxon>Metazoa</taxon>
        <taxon>Ecdysozoa</taxon>
        <taxon>Nematoda</taxon>
        <taxon>Chromadorea</taxon>
        <taxon>Rhabditida</taxon>
        <taxon>Rhabditina</taxon>
        <taxon>Rhabditomorpha</taxon>
        <taxon>Rhabditoidea</taxon>
        <taxon>Rhabditidae</taxon>
        <taxon>Peloderinae</taxon>
        <taxon>Caenorhabditis</taxon>
    </lineage>
</organism>
<feature type="signal peptide" evidence="2">
    <location>
        <begin position="1"/>
        <end position="15"/>
    </location>
</feature>
<feature type="propeptide" id="PRO_0000026194" evidence="2">
    <location>
        <begin position="16"/>
        <end position="80"/>
    </location>
</feature>
<feature type="chain" id="PRO_0000026195" description="Cathepsin B-like cysteine proteinase 4">
    <location>
        <begin position="81"/>
        <end position="335"/>
    </location>
</feature>
<feature type="active site" evidence="6">
    <location>
        <position position="109"/>
    </location>
</feature>
<feature type="active site" evidence="6">
    <location>
        <position position="281"/>
    </location>
</feature>
<feature type="active site" evidence="1">
    <location>
        <position position="301"/>
    </location>
</feature>
<feature type="glycosylation site" description="N-linked (GlcNAc...) asparagine" evidence="2">
    <location>
        <position position="193"/>
    </location>
</feature>
<feature type="disulfide bond" evidence="1">
    <location>
        <begin position="94"/>
        <end position="123"/>
    </location>
</feature>
<feature type="disulfide bond" evidence="1">
    <location>
        <begin position="106"/>
        <end position="150"/>
    </location>
</feature>
<feature type="disulfide bond" evidence="1">
    <location>
        <begin position="142"/>
        <end position="209"/>
    </location>
</feature>
<feature type="disulfide bond" evidence="1">
    <location>
        <begin position="143"/>
        <end position="146"/>
    </location>
</feature>
<feature type="disulfide bond" evidence="1">
    <location>
        <begin position="179"/>
        <end position="213"/>
    </location>
</feature>
<feature type="disulfide bond" evidence="1">
    <location>
        <begin position="187"/>
        <end position="199"/>
    </location>
</feature>
<feature type="mutagenesis site" description="Loss of protease and RIBE activity." evidence="6">
    <original>C</original>
    <variation>A</variation>
    <location>
        <position position="109"/>
    </location>
</feature>
<feature type="mutagenesis site" description="Loss of protease and RIBE activity." evidence="6">
    <original>H</original>
    <variation>A</variation>
    <location>
        <position position="281"/>
    </location>
</feature>
<feature type="mutagenesis site" description="No effect on protease or RIBE activity." evidence="6">
    <original>N</original>
    <variation>A</variation>
    <location>
        <position position="301"/>
    </location>
</feature>
<name>CPR4_CAEEL</name>
<gene>
    <name type="primary">cpr-4</name>
    <name type="ORF">F44C4.3</name>
</gene>
<reference key="1">
    <citation type="journal article" date="1996" name="DNA Cell Biol.">
        <title>Isolation and characterization of four developmentally regulated cathepsin B-like cysteine protease genes from the nematode Caenorhabditis elegans.</title>
        <authorList>
            <person name="Larminie C.G.C."/>
            <person name="Johnstone I.L."/>
        </authorList>
    </citation>
    <scope>NUCLEOTIDE SEQUENCE [GENOMIC DNA / MRNA]</scope>
    <source>
        <strain>Bristol N2</strain>
    </source>
</reference>
<reference key="2">
    <citation type="journal article" date="1998" name="Science">
        <title>Genome sequence of the nematode C. elegans: a platform for investigating biology.</title>
        <authorList>
            <consortium name="The C. elegans sequencing consortium"/>
        </authorList>
    </citation>
    <scope>NUCLEOTIDE SEQUENCE [LARGE SCALE GENOMIC DNA]</scope>
    <source>
        <strain>Bristol N2</strain>
    </source>
</reference>
<reference key="3">
    <citation type="journal article" date="2017" name="Nature">
        <title>Cysteine protease cathepsin B mediates radiation-induced bystander effects.</title>
        <authorList>
            <person name="Peng Y."/>
            <person name="Zhang M."/>
            <person name="Zheng L."/>
            <person name="Liang Q."/>
            <person name="Li H."/>
            <person name="Chen J.T."/>
            <person name="Guo H."/>
            <person name="Yoshina S."/>
            <person name="Chen Y.Z."/>
            <person name="Zhao X."/>
            <person name="Wu X."/>
            <person name="Liu B."/>
            <person name="Mitani S."/>
            <person name="Yu J.S."/>
            <person name="Xue D."/>
        </authorList>
    </citation>
    <scope>FUNCTION</scope>
    <scope>SUBCELLULAR LOCATION</scope>
    <scope>DEVELOPMENTAL STAGE</scope>
    <scope>INDUCTION</scope>
    <scope>DISRUPTION PHENOTYPE</scope>
    <scope>ACTIVE SITES</scope>
    <scope>MUTAGENESIS OF CYS-109; HIS-281 AND ASN-301</scope>
    <scope>IDENTIFICATION BY MASS SPECTROMETRY</scope>
</reference>
<dbReference type="EC" id="3.4.22.-"/>
<dbReference type="EMBL" id="L39895">
    <property type="protein sequence ID" value="AAA98785.1"/>
    <property type="molecule type" value="mRNA"/>
</dbReference>
<dbReference type="EMBL" id="L39926">
    <property type="protein sequence ID" value="AAA98783.1"/>
    <property type="molecule type" value="Genomic_DNA"/>
</dbReference>
<dbReference type="EMBL" id="FO081381">
    <property type="protein sequence ID" value="CCD71204.1"/>
    <property type="molecule type" value="Genomic_DNA"/>
</dbReference>
<dbReference type="PIR" id="T37280">
    <property type="entry name" value="T37280"/>
</dbReference>
<dbReference type="RefSeq" id="NP_504682.1">
    <property type="nucleotide sequence ID" value="NM_072281.6"/>
</dbReference>
<dbReference type="SMR" id="P43508"/>
<dbReference type="BioGRID" id="44098">
    <property type="interactions" value="10"/>
</dbReference>
<dbReference type="DIP" id="DIP-25376N"/>
<dbReference type="FunCoup" id="P43508">
    <property type="interactions" value="360"/>
</dbReference>
<dbReference type="IntAct" id="P43508">
    <property type="interactions" value="1"/>
</dbReference>
<dbReference type="STRING" id="6239.F44C4.3.1"/>
<dbReference type="MEROPS" id="C01.A34"/>
<dbReference type="GlyCosmos" id="P43508">
    <property type="glycosylation" value="1 site, No reported glycans"/>
</dbReference>
<dbReference type="PaxDb" id="6239-F44C4.3"/>
<dbReference type="PeptideAtlas" id="P43508"/>
<dbReference type="EnsemblMetazoa" id="F44C4.3.1">
    <property type="protein sequence ID" value="F44C4.3.1"/>
    <property type="gene ID" value="WBGene00000784"/>
</dbReference>
<dbReference type="GeneID" id="179053"/>
<dbReference type="KEGG" id="cel:CELE_F44C4.3"/>
<dbReference type="UCSC" id="F44C4.3">
    <property type="organism name" value="c. elegans"/>
</dbReference>
<dbReference type="AGR" id="WB:WBGene00000784"/>
<dbReference type="CTD" id="179053"/>
<dbReference type="WormBase" id="F44C4.3">
    <property type="protein sequence ID" value="CE07251"/>
    <property type="gene ID" value="WBGene00000784"/>
    <property type="gene designation" value="cpr-4"/>
</dbReference>
<dbReference type="eggNOG" id="KOG1543">
    <property type="taxonomic scope" value="Eukaryota"/>
</dbReference>
<dbReference type="GeneTree" id="ENSGT00970000196395"/>
<dbReference type="HOGENOM" id="CLU_012184_3_3_1"/>
<dbReference type="InParanoid" id="P43508"/>
<dbReference type="OMA" id="YPINAWK"/>
<dbReference type="OrthoDB" id="10058785at2759"/>
<dbReference type="PhylomeDB" id="P43508"/>
<dbReference type="BRENDA" id="3.4.22.1">
    <property type="organism ID" value="1045"/>
</dbReference>
<dbReference type="PRO" id="PR:P43508"/>
<dbReference type="Proteomes" id="UP000001940">
    <property type="component" value="Chromosome V"/>
</dbReference>
<dbReference type="Bgee" id="WBGene00000784">
    <property type="expression patterns" value="Expressed in adult organism and 4 other cell types or tissues"/>
</dbReference>
<dbReference type="GO" id="GO:0005576">
    <property type="term" value="C:extracellular region"/>
    <property type="evidence" value="ECO:0000314"/>
    <property type="project" value="UniProtKB"/>
</dbReference>
<dbReference type="GO" id="GO:0005615">
    <property type="term" value="C:extracellular space"/>
    <property type="evidence" value="ECO:0000318"/>
    <property type="project" value="GO_Central"/>
</dbReference>
<dbReference type="GO" id="GO:0005764">
    <property type="term" value="C:lysosome"/>
    <property type="evidence" value="ECO:0000318"/>
    <property type="project" value="GO_Central"/>
</dbReference>
<dbReference type="GO" id="GO:0004197">
    <property type="term" value="F:cysteine-type endopeptidase activity"/>
    <property type="evidence" value="ECO:0000314"/>
    <property type="project" value="UniProtKB"/>
</dbReference>
<dbReference type="GO" id="GO:0071480">
    <property type="term" value="P:cellular response to gamma radiation"/>
    <property type="evidence" value="ECO:0000315"/>
    <property type="project" value="UniProtKB"/>
</dbReference>
<dbReference type="GO" id="GO:0034644">
    <property type="term" value="P:cellular response to UV"/>
    <property type="evidence" value="ECO:0000315"/>
    <property type="project" value="UniProtKB"/>
</dbReference>
<dbReference type="GO" id="GO:0051603">
    <property type="term" value="P:proteolysis involved in protein catabolic process"/>
    <property type="evidence" value="ECO:0000314"/>
    <property type="project" value="UniProtKB"/>
</dbReference>
<dbReference type="CDD" id="cd02620">
    <property type="entry name" value="Peptidase_C1A_CathepsinB"/>
    <property type="match status" value="1"/>
</dbReference>
<dbReference type="FunFam" id="3.90.70.10:FF:000031">
    <property type="entry name" value="Cathepsin B"/>
    <property type="match status" value="1"/>
</dbReference>
<dbReference type="Gene3D" id="3.90.70.10">
    <property type="entry name" value="Cysteine proteinases"/>
    <property type="match status" value="1"/>
</dbReference>
<dbReference type="InterPro" id="IPR038765">
    <property type="entry name" value="Papain-like_cys_pep_sf"/>
</dbReference>
<dbReference type="InterPro" id="IPR025661">
    <property type="entry name" value="Pept_asp_AS"/>
</dbReference>
<dbReference type="InterPro" id="IPR000169">
    <property type="entry name" value="Pept_cys_AS"/>
</dbReference>
<dbReference type="InterPro" id="IPR025660">
    <property type="entry name" value="Pept_his_AS"/>
</dbReference>
<dbReference type="InterPro" id="IPR013128">
    <property type="entry name" value="Peptidase_C1A"/>
</dbReference>
<dbReference type="InterPro" id="IPR000668">
    <property type="entry name" value="Peptidase_C1A_C"/>
</dbReference>
<dbReference type="PANTHER" id="PTHR12411">
    <property type="entry name" value="CYSTEINE PROTEASE FAMILY C1-RELATED"/>
    <property type="match status" value="1"/>
</dbReference>
<dbReference type="Pfam" id="PF00112">
    <property type="entry name" value="Peptidase_C1"/>
    <property type="match status" value="1"/>
</dbReference>
<dbReference type="PRINTS" id="PR00705">
    <property type="entry name" value="PAPAIN"/>
</dbReference>
<dbReference type="SMART" id="SM00645">
    <property type="entry name" value="Pept_C1"/>
    <property type="match status" value="1"/>
</dbReference>
<dbReference type="SUPFAM" id="SSF54001">
    <property type="entry name" value="Cysteine proteinases"/>
    <property type="match status" value="1"/>
</dbReference>
<dbReference type="PROSITE" id="PS00640">
    <property type="entry name" value="THIOL_PROTEASE_ASN"/>
    <property type="match status" value="1"/>
</dbReference>
<dbReference type="PROSITE" id="PS00139">
    <property type="entry name" value="THIOL_PROTEASE_CYS"/>
    <property type="match status" value="1"/>
</dbReference>
<dbReference type="PROSITE" id="PS00639">
    <property type="entry name" value="THIOL_PROTEASE_HIS"/>
    <property type="match status" value="1"/>
</dbReference>
<protein>
    <recommendedName>
        <fullName>Cathepsin B-like cysteine proteinase 4</fullName>
        <ecNumber>3.4.22.-</ecNumber>
    </recommendedName>
    <alternativeName>
        <fullName>Cysteine protease-related 4</fullName>
    </alternativeName>
</protein>
<evidence type="ECO:0000250" key="1">
    <source>
        <dbReference type="UniProtKB" id="P07858"/>
    </source>
</evidence>
<evidence type="ECO:0000255" key="2"/>
<evidence type="ECO:0000255" key="3">
    <source>
        <dbReference type="PROSITE-ProRule" id="PRU10088"/>
    </source>
</evidence>
<evidence type="ECO:0000255" key="4">
    <source>
        <dbReference type="PROSITE-ProRule" id="PRU10089"/>
    </source>
</evidence>
<evidence type="ECO:0000255" key="5">
    <source>
        <dbReference type="PROSITE-ProRule" id="PRU10090"/>
    </source>
</evidence>
<evidence type="ECO:0000269" key="6">
    <source>
    </source>
</evidence>
<sequence length="335" mass="36493">MKYLILAALVAVTAGLVIPLVPKTQEAITEYVNSKQSLWKAEIPKDITIEQVKKRLMRTEFVAPHTPDVEVVKHDINEDTIPATFDARTQWPNCMSINNIRDQSDCGSCWAFAAAEAASDRFCIASNGAVNTLLSAEDVLSCCSNCGYGCEGGYPINAWKYLVKSGFCTGGSYEAQFGCKPYSLAPCGETVGNVTWPSCPDDGYDTPACVNKCTNKNYNVAYTADKHFGSTAYAVGKKVSQIQAEIIAHGPVEAAFTVYEDFYQYKTGVYVHTTGQELGGHAIRILGWGTDNGTPYWLVANSWNVNWGENGYFRIIRGTNECGIEHAVVGGVPKV</sequence>
<accession>P43508</accession>
<proteinExistence type="evidence at protein level"/>
<keyword id="KW-1015">Disulfide bond</keyword>
<keyword id="KW-0325">Glycoprotein</keyword>
<keyword id="KW-0378">Hydrolase</keyword>
<keyword id="KW-0645">Protease</keyword>
<keyword id="KW-1185">Reference proteome</keyword>
<keyword id="KW-0964">Secreted</keyword>
<keyword id="KW-0732">Signal</keyword>
<keyword id="KW-0788">Thiol protease</keyword>
<keyword id="KW-0865">Zymogen</keyword>
<comment type="function">
    <text evidence="6">Thiol protease which shows activity against the fluorogenic substrate z-Arg-Arg-AMC.</text>
</comment>
<comment type="subcellular location">
    <subcellularLocation>
        <location evidence="6">Secreted</location>
    </subcellularLocation>
    <text evidence="6">Secreted from animals irradiated with ultraviolet or ionizing gamma rays into the culture medium.</text>
</comment>
<comment type="developmental stage">
    <text evidence="6">Not detected in the embryo, observed in the intestine of early stage L1-L3 larvae, peaks at the L4 larval stage and declines in adulthood.</text>
</comment>
<comment type="induction">
    <text evidence="6">Induced by ultraviolet and ionizing radiation through a cep-1-dependent mechanism.</text>
</comment>
<comment type="disruption phenotype">
    <text evidence="6">RNAi-mediated knockdown results in greatly reduced radiation-induced bystander effect (RIBE) activity in the culture medium of irradiated animals.</text>
</comment>
<comment type="miscellaneous">
    <text evidence="6">Mediates the radiation-induced bystander effect (RIBE), a process in which factors released by irradiated cells or tissues exert effects on unexposed cells or tissues. Following localized ultraviolet irradiation of the head, mediates RIBE in multiple unexposed regions including the posterior region. Also leads to RIBE including inhibition of cell death and increased embryonic lethality of progeny in unirradiated animals exposed to the culture medium of irradiated animals. Likely to exert RIBE by acting through the insulin-like receptor daf-2.</text>
</comment>
<comment type="similarity">
    <text evidence="3 4 5">Belongs to the peptidase C1 family.</text>
</comment>